<gene>
    <name evidence="1" type="primary">rpmF</name>
    <name type="ordered locus">Bpro_3652</name>
</gene>
<feature type="chain" id="PRO_0000296525" description="Large ribosomal subunit protein bL32">
    <location>
        <begin position="1"/>
        <end position="60"/>
    </location>
</feature>
<feature type="region of interest" description="Disordered" evidence="2">
    <location>
        <begin position="1"/>
        <end position="60"/>
    </location>
</feature>
<feature type="compositionally biased region" description="Basic residues" evidence="2">
    <location>
        <begin position="9"/>
        <end position="19"/>
    </location>
</feature>
<feature type="compositionally biased region" description="Basic residues" evidence="2">
    <location>
        <begin position="49"/>
        <end position="60"/>
    </location>
</feature>
<keyword id="KW-1185">Reference proteome</keyword>
<keyword id="KW-0687">Ribonucleoprotein</keyword>
<keyword id="KW-0689">Ribosomal protein</keyword>
<dbReference type="EMBL" id="CP000316">
    <property type="protein sequence ID" value="ABE45556.1"/>
    <property type="molecule type" value="Genomic_DNA"/>
</dbReference>
<dbReference type="RefSeq" id="WP_007873878.1">
    <property type="nucleotide sequence ID" value="NZ_FNHX01000004.1"/>
</dbReference>
<dbReference type="SMR" id="Q126I6"/>
<dbReference type="STRING" id="296591.Bpro_3652"/>
<dbReference type="KEGG" id="pol:Bpro_3652"/>
<dbReference type="eggNOG" id="COG0333">
    <property type="taxonomic scope" value="Bacteria"/>
</dbReference>
<dbReference type="HOGENOM" id="CLU_129084_2_1_4"/>
<dbReference type="OrthoDB" id="9801927at2"/>
<dbReference type="Proteomes" id="UP000001983">
    <property type="component" value="Chromosome"/>
</dbReference>
<dbReference type="GO" id="GO:0015934">
    <property type="term" value="C:large ribosomal subunit"/>
    <property type="evidence" value="ECO:0007669"/>
    <property type="project" value="InterPro"/>
</dbReference>
<dbReference type="GO" id="GO:0003735">
    <property type="term" value="F:structural constituent of ribosome"/>
    <property type="evidence" value="ECO:0007669"/>
    <property type="project" value="InterPro"/>
</dbReference>
<dbReference type="GO" id="GO:0006412">
    <property type="term" value="P:translation"/>
    <property type="evidence" value="ECO:0007669"/>
    <property type="project" value="UniProtKB-UniRule"/>
</dbReference>
<dbReference type="HAMAP" id="MF_00340">
    <property type="entry name" value="Ribosomal_bL32"/>
    <property type="match status" value="1"/>
</dbReference>
<dbReference type="InterPro" id="IPR002677">
    <property type="entry name" value="Ribosomal_bL32"/>
</dbReference>
<dbReference type="InterPro" id="IPR044957">
    <property type="entry name" value="Ribosomal_bL32_bact"/>
</dbReference>
<dbReference type="InterPro" id="IPR011332">
    <property type="entry name" value="Ribosomal_zn-bd"/>
</dbReference>
<dbReference type="NCBIfam" id="TIGR01031">
    <property type="entry name" value="rpmF_bact"/>
    <property type="match status" value="1"/>
</dbReference>
<dbReference type="PANTHER" id="PTHR35534">
    <property type="entry name" value="50S RIBOSOMAL PROTEIN L32"/>
    <property type="match status" value="1"/>
</dbReference>
<dbReference type="PANTHER" id="PTHR35534:SF1">
    <property type="entry name" value="LARGE RIBOSOMAL SUBUNIT PROTEIN BL32"/>
    <property type="match status" value="1"/>
</dbReference>
<dbReference type="Pfam" id="PF01783">
    <property type="entry name" value="Ribosomal_L32p"/>
    <property type="match status" value="1"/>
</dbReference>
<dbReference type="SUPFAM" id="SSF57829">
    <property type="entry name" value="Zn-binding ribosomal proteins"/>
    <property type="match status" value="1"/>
</dbReference>
<reference key="1">
    <citation type="journal article" date="2008" name="Appl. Environ. Microbiol.">
        <title>The genome of Polaromonas sp. strain JS666: insights into the evolution of a hydrocarbon- and xenobiotic-degrading bacterium, and features of relevance to biotechnology.</title>
        <authorList>
            <person name="Mattes T.E."/>
            <person name="Alexander A.K."/>
            <person name="Richardson P.M."/>
            <person name="Munk A.C."/>
            <person name="Han C.S."/>
            <person name="Stothard P."/>
            <person name="Coleman N.V."/>
        </authorList>
    </citation>
    <scope>NUCLEOTIDE SEQUENCE [LARGE SCALE GENOMIC DNA]</scope>
    <source>
        <strain>JS666 / ATCC BAA-500</strain>
    </source>
</reference>
<organism>
    <name type="scientific">Polaromonas sp. (strain JS666 / ATCC BAA-500)</name>
    <dbReference type="NCBI Taxonomy" id="296591"/>
    <lineage>
        <taxon>Bacteria</taxon>
        <taxon>Pseudomonadati</taxon>
        <taxon>Pseudomonadota</taxon>
        <taxon>Betaproteobacteria</taxon>
        <taxon>Burkholderiales</taxon>
        <taxon>Comamonadaceae</taxon>
        <taxon>Polaromonas</taxon>
    </lineage>
</organism>
<comment type="similarity">
    <text evidence="1">Belongs to the bacterial ribosomal protein bL32 family.</text>
</comment>
<protein>
    <recommendedName>
        <fullName evidence="1">Large ribosomal subunit protein bL32</fullName>
    </recommendedName>
    <alternativeName>
        <fullName evidence="3">50S ribosomal protein L32</fullName>
    </alternativeName>
</protein>
<proteinExistence type="inferred from homology"/>
<accession>Q126I6</accession>
<sequence>MAVQQNKKSPSKRGMHRSHNALTVPGIAVESTTGETHLRHHISPTGFYRGRKVLKTKSEA</sequence>
<evidence type="ECO:0000255" key="1">
    <source>
        <dbReference type="HAMAP-Rule" id="MF_00340"/>
    </source>
</evidence>
<evidence type="ECO:0000256" key="2">
    <source>
        <dbReference type="SAM" id="MobiDB-lite"/>
    </source>
</evidence>
<evidence type="ECO:0000305" key="3"/>
<name>RL32_POLSJ</name>